<dbReference type="EC" id="1.7.1.7" evidence="1"/>
<dbReference type="EMBL" id="FM177140">
    <property type="protein sequence ID" value="CAQ66110.1"/>
    <property type="molecule type" value="Genomic_DNA"/>
</dbReference>
<dbReference type="SMR" id="B3WCK9"/>
<dbReference type="KEGG" id="lcb:LCABL_10240"/>
<dbReference type="HOGENOM" id="CLU_022552_5_0_9"/>
<dbReference type="GO" id="GO:0005829">
    <property type="term" value="C:cytosol"/>
    <property type="evidence" value="ECO:0007669"/>
    <property type="project" value="TreeGrafter"/>
</dbReference>
<dbReference type="GO" id="GO:1902560">
    <property type="term" value="C:GMP reductase complex"/>
    <property type="evidence" value="ECO:0007669"/>
    <property type="project" value="InterPro"/>
</dbReference>
<dbReference type="GO" id="GO:0003920">
    <property type="term" value="F:GMP reductase activity"/>
    <property type="evidence" value="ECO:0007669"/>
    <property type="project" value="UniProtKB-UniRule"/>
</dbReference>
<dbReference type="GO" id="GO:0006163">
    <property type="term" value="P:purine nucleotide metabolic process"/>
    <property type="evidence" value="ECO:0007669"/>
    <property type="project" value="UniProtKB-UniRule"/>
</dbReference>
<dbReference type="CDD" id="cd00381">
    <property type="entry name" value="IMPDH"/>
    <property type="match status" value="1"/>
</dbReference>
<dbReference type="FunFam" id="3.20.20.70:FF:000424">
    <property type="entry name" value="Inosine-5'-monophosphate dehydrogenase 2"/>
    <property type="match status" value="1"/>
</dbReference>
<dbReference type="Gene3D" id="3.20.20.70">
    <property type="entry name" value="Aldolase class I"/>
    <property type="match status" value="1"/>
</dbReference>
<dbReference type="HAMAP" id="MF_01511">
    <property type="entry name" value="GMP_reduct_type2"/>
    <property type="match status" value="1"/>
</dbReference>
<dbReference type="InterPro" id="IPR013785">
    <property type="entry name" value="Aldolase_TIM"/>
</dbReference>
<dbReference type="InterPro" id="IPR050139">
    <property type="entry name" value="GMP_reductase"/>
</dbReference>
<dbReference type="InterPro" id="IPR005994">
    <property type="entry name" value="GuaC_type_2"/>
</dbReference>
<dbReference type="InterPro" id="IPR015875">
    <property type="entry name" value="IMP_DH/GMP_Rdtase_CS"/>
</dbReference>
<dbReference type="InterPro" id="IPR001093">
    <property type="entry name" value="IMP_DH_GMPRt"/>
</dbReference>
<dbReference type="NCBIfam" id="TIGR01306">
    <property type="entry name" value="GMP_reduct_2"/>
    <property type="match status" value="1"/>
</dbReference>
<dbReference type="NCBIfam" id="NF003966">
    <property type="entry name" value="PRK05458.1"/>
    <property type="match status" value="1"/>
</dbReference>
<dbReference type="PANTHER" id="PTHR43170">
    <property type="entry name" value="GMP REDUCTASE"/>
    <property type="match status" value="1"/>
</dbReference>
<dbReference type="PANTHER" id="PTHR43170:SF5">
    <property type="entry name" value="GMP REDUCTASE"/>
    <property type="match status" value="1"/>
</dbReference>
<dbReference type="Pfam" id="PF00478">
    <property type="entry name" value="IMPDH"/>
    <property type="match status" value="1"/>
</dbReference>
<dbReference type="PIRSF" id="PIRSF036500">
    <property type="entry name" value="GMP_red_Firmic"/>
    <property type="match status" value="1"/>
</dbReference>
<dbReference type="SMART" id="SM01240">
    <property type="entry name" value="IMPDH"/>
    <property type="match status" value="1"/>
</dbReference>
<dbReference type="SUPFAM" id="SSF51412">
    <property type="entry name" value="Inosine monophosphate dehydrogenase (IMPDH)"/>
    <property type="match status" value="1"/>
</dbReference>
<dbReference type="PROSITE" id="PS00487">
    <property type="entry name" value="IMP_DH_GMP_RED"/>
    <property type="match status" value="1"/>
</dbReference>
<evidence type="ECO:0000255" key="1">
    <source>
        <dbReference type="HAMAP-Rule" id="MF_01511"/>
    </source>
</evidence>
<feature type="chain" id="PRO_1000146138" description="GMP reductase">
    <location>
        <begin position="1"/>
        <end position="329"/>
    </location>
</feature>
<feature type="active site" description="Thioimidate intermediate" evidence="1">
    <location>
        <position position="178"/>
    </location>
</feature>
<feature type="binding site" evidence="1">
    <location>
        <begin position="207"/>
        <end position="230"/>
    </location>
    <ligand>
        <name>NADP(+)</name>
        <dbReference type="ChEBI" id="CHEBI:58349"/>
    </ligand>
</feature>
<protein>
    <recommendedName>
        <fullName evidence="1">GMP reductase</fullName>
        <ecNumber evidence="1">1.7.1.7</ecNumber>
    </recommendedName>
    <alternativeName>
        <fullName evidence="1">Guanosine 5'-monophosphate oxidoreductase</fullName>
        <shortName evidence="1">Guanosine monophosphate reductase</shortName>
    </alternativeName>
</protein>
<reference key="1">
    <citation type="submission" date="2008-06" db="EMBL/GenBank/DDBJ databases">
        <title>Lactobacillus casei BL23 complete genome sequence.</title>
        <authorList>
            <person name="Maze A."/>
            <person name="Boel G."/>
            <person name="Bourand A."/>
            <person name="Loux V."/>
            <person name="Gibrat J.F."/>
            <person name="Zuniga M."/>
            <person name="Hartke A."/>
            <person name="Deutscher J."/>
        </authorList>
    </citation>
    <scope>NUCLEOTIDE SEQUENCE [LARGE SCALE GENOMIC DNA]</scope>
    <source>
        <strain>BL23</strain>
    </source>
</reference>
<gene>
    <name evidence="1" type="primary">guaC</name>
    <name type="ordered locus">LCABL_10240</name>
</gene>
<sequence>MNNGMQIFDYEDIQMIPNKCVVQSRKEVDTSVKFGPHTFKIPVVPANMQTIIDEPLAIWLAEHDYFYIMHRFQPERRMDFVRDMKKRGLIASISVGVKDDEFDFIEALAANELTPDYITIDIAHGYAQVVIDMIQHIKHYLPNAFVIAGNVGTPEAVRELENAGADATKVGIGPGKVCLTKLKTGFGTGGWQLAAVRWCAKAARKPIIADGGIRNNGDIAKSIRFGATMCMIGSLFAGHEETPGKHVNIDGKEYQEYYGSASEYQKGTHHNVEGKKILLPVKGKIGDTLKEMQEDLQSAVSYAGGRDLESLTKVDYVIVKNSIFNGDQY</sequence>
<comment type="function">
    <text evidence="1">Catalyzes the irreversible NADPH-dependent deamination of GMP to IMP. It functions in the conversion of nucleobase, nucleoside and nucleotide derivatives of G to A nucleotides, and in maintaining the intracellular balance of A and G nucleotides.</text>
</comment>
<comment type="catalytic activity">
    <reaction evidence="1">
        <text>IMP + NH4(+) + NADP(+) = GMP + NADPH + 2 H(+)</text>
        <dbReference type="Rhea" id="RHEA:17185"/>
        <dbReference type="ChEBI" id="CHEBI:15378"/>
        <dbReference type="ChEBI" id="CHEBI:28938"/>
        <dbReference type="ChEBI" id="CHEBI:57783"/>
        <dbReference type="ChEBI" id="CHEBI:58053"/>
        <dbReference type="ChEBI" id="CHEBI:58115"/>
        <dbReference type="ChEBI" id="CHEBI:58349"/>
        <dbReference type="EC" id="1.7.1.7"/>
    </reaction>
</comment>
<comment type="similarity">
    <text evidence="1">Belongs to the IMPDH/GMPR family. GuaC type 2 subfamily.</text>
</comment>
<organism>
    <name type="scientific">Lacticaseibacillus casei (strain BL23)</name>
    <name type="common">Lactobacillus casei</name>
    <dbReference type="NCBI Taxonomy" id="543734"/>
    <lineage>
        <taxon>Bacteria</taxon>
        <taxon>Bacillati</taxon>
        <taxon>Bacillota</taxon>
        <taxon>Bacilli</taxon>
        <taxon>Lactobacillales</taxon>
        <taxon>Lactobacillaceae</taxon>
        <taxon>Lacticaseibacillus</taxon>
    </lineage>
</organism>
<accession>B3WCK9</accession>
<proteinExistence type="inferred from homology"/>
<keyword id="KW-0521">NADP</keyword>
<keyword id="KW-0560">Oxidoreductase</keyword>
<name>GUAC_LACCB</name>